<keyword id="KW-0067">ATP-binding</keyword>
<keyword id="KW-0436">Ligase</keyword>
<keyword id="KW-0547">Nucleotide-binding</keyword>
<dbReference type="EC" id="6.3.2.2" evidence="1"/>
<dbReference type="EMBL" id="CP001120">
    <property type="protein sequence ID" value="ACF68796.1"/>
    <property type="molecule type" value="Genomic_DNA"/>
</dbReference>
<dbReference type="RefSeq" id="WP_001196908.1">
    <property type="nucleotide sequence ID" value="NC_011083.1"/>
</dbReference>
<dbReference type="SMR" id="B4TAD4"/>
<dbReference type="KEGG" id="seh:SeHA_C0695"/>
<dbReference type="HOGENOM" id="CLU_044848_1_1_6"/>
<dbReference type="Proteomes" id="UP000001866">
    <property type="component" value="Chromosome"/>
</dbReference>
<dbReference type="GO" id="GO:0005524">
    <property type="term" value="F:ATP binding"/>
    <property type="evidence" value="ECO:0007669"/>
    <property type="project" value="UniProtKB-KW"/>
</dbReference>
<dbReference type="GO" id="GO:0004357">
    <property type="term" value="F:glutamate-cysteine ligase activity"/>
    <property type="evidence" value="ECO:0007669"/>
    <property type="project" value="UniProtKB-EC"/>
</dbReference>
<dbReference type="GO" id="GO:0042398">
    <property type="term" value="P:modified amino acid biosynthetic process"/>
    <property type="evidence" value="ECO:0007669"/>
    <property type="project" value="InterPro"/>
</dbReference>
<dbReference type="FunFam" id="3.30.590.20:FF:000002">
    <property type="entry name" value="Putative glutamate--cysteine ligase 2"/>
    <property type="match status" value="1"/>
</dbReference>
<dbReference type="Gene3D" id="3.30.590.20">
    <property type="match status" value="1"/>
</dbReference>
<dbReference type="HAMAP" id="MF_01609">
    <property type="entry name" value="Glu_cys_ligase_2"/>
    <property type="match status" value="1"/>
</dbReference>
<dbReference type="InterPro" id="IPR050141">
    <property type="entry name" value="GCL_type2/YbdK_subfam"/>
</dbReference>
<dbReference type="InterPro" id="IPR006336">
    <property type="entry name" value="GCS2"/>
</dbReference>
<dbReference type="InterPro" id="IPR014746">
    <property type="entry name" value="Gln_synth/guanido_kin_cat_dom"/>
</dbReference>
<dbReference type="InterPro" id="IPR011793">
    <property type="entry name" value="YbdK"/>
</dbReference>
<dbReference type="NCBIfam" id="TIGR02050">
    <property type="entry name" value="gshA_cyan_rel"/>
    <property type="match status" value="1"/>
</dbReference>
<dbReference type="NCBIfam" id="NF010040">
    <property type="entry name" value="PRK13516.1"/>
    <property type="match status" value="1"/>
</dbReference>
<dbReference type="PANTHER" id="PTHR36510">
    <property type="entry name" value="GLUTAMATE--CYSTEINE LIGASE 2-RELATED"/>
    <property type="match status" value="1"/>
</dbReference>
<dbReference type="PANTHER" id="PTHR36510:SF1">
    <property type="entry name" value="GLUTAMATE--CYSTEINE LIGASE 2-RELATED"/>
    <property type="match status" value="1"/>
</dbReference>
<dbReference type="Pfam" id="PF04107">
    <property type="entry name" value="GCS2"/>
    <property type="match status" value="1"/>
</dbReference>
<dbReference type="SUPFAM" id="SSF55931">
    <property type="entry name" value="Glutamine synthetase/guanido kinase"/>
    <property type="match status" value="1"/>
</dbReference>
<evidence type="ECO:0000255" key="1">
    <source>
        <dbReference type="HAMAP-Rule" id="MF_01609"/>
    </source>
</evidence>
<comment type="function">
    <text evidence="1">ATP-dependent carboxylate-amine ligase which exhibits weak glutamate--cysteine ligase activity.</text>
</comment>
<comment type="catalytic activity">
    <reaction evidence="1">
        <text>L-cysteine + L-glutamate + ATP = gamma-L-glutamyl-L-cysteine + ADP + phosphate + H(+)</text>
        <dbReference type="Rhea" id="RHEA:13285"/>
        <dbReference type="ChEBI" id="CHEBI:15378"/>
        <dbReference type="ChEBI" id="CHEBI:29985"/>
        <dbReference type="ChEBI" id="CHEBI:30616"/>
        <dbReference type="ChEBI" id="CHEBI:35235"/>
        <dbReference type="ChEBI" id="CHEBI:43474"/>
        <dbReference type="ChEBI" id="CHEBI:58173"/>
        <dbReference type="ChEBI" id="CHEBI:456216"/>
        <dbReference type="EC" id="6.3.2.2"/>
    </reaction>
</comment>
<comment type="subunit">
    <text evidence="1">Homodimer.</text>
</comment>
<comment type="similarity">
    <text evidence="1">Belongs to the glutamate--cysteine ligase type 2 family. YbdK subfamily.</text>
</comment>
<reference key="1">
    <citation type="journal article" date="2011" name="J. Bacteriol.">
        <title>Comparative genomics of 28 Salmonella enterica isolates: evidence for CRISPR-mediated adaptive sublineage evolution.</title>
        <authorList>
            <person name="Fricke W.F."/>
            <person name="Mammel M.K."/>
            <person name="McDermott P.F."/>
            <person name="Tartera C."/>
            <person name="White D.G."/>
            <person name="Leclerc J.E."/>
            <person name="Ravel J."/>
            <person name="Cebula T.A."/>
        </authorList>
    </citation>
    <scope>NUCLEOTIDE SEQUENCE [LARGE SCALE GENOMIC DNA]</scope>
    <source>
        <strain>SL476</strain>
    </source>
</reference>
<name>GCS2_SALHS</name>
<accession>B4TAD4</accession>
<gene>
    <name type="primary">ybdK</name>
    <name type="ordered locus">SeHA_C0695</name>
</gene>
<feature type="chain" id="PRO_1000148231" description="Putative glutamate--cysteine ligase 2">
    <location>
        <begin position="1"/>
        <end position="372"/>
    </location>
</feature>
<sequence length="372" mass="41613">MALNDFHVSEPYTLGIELEMQVINPPGYDLSQDSSTLIDAVKPQLTAGEIKHDITESMLEMATGVCRDIDQAAAQLSAMQHVILQAASEHHLGICGGGTHPFQKWQRQEVCDNERYQRTLENFGYLIQQATVFGQHVHVGCANGDDAIYLLHGLSHFVPHFIALSAASPYMQGSDTRFACARLNIFSAFPDNGPMPWVSNWQEFAGLFRRLSYTTMIDSIKDLHWDIRPSPAFGTVEVRVMDTPLTLDHAINMAGLIQATAHWLLTERPFKPQEQDYLLYKFNRFQACRYGLEGVLTDAYTGDRRRLADDTLRLLDNVTPSARKLGADSAIDALRLQVKKGGNEAQYMREFIADGGSLIGLVQKHCEIWAGQ</sequence>
<protein>
    <recommendedName>
        <fullName evidence="1">Putative glutamate--cysteine ligase 2</fullName>
        <ecNumber evidence="1">6.3.2.2</ecNumber>
    </recommendedName>
    <alternativeName>
        <fullName evidence="1">Gamma-glutamylcysteine synthetase 2</fullName>
        <shortName evidence="1">GCS 2</shortName>
        <shortName evidence="1">Gamma-GCS 2</shortName>
    </alternativeName>
</protein>
<proteinExistence type="inferred from homology"/>
<organism>
    <name type="scientific">Salmonella heidelberg (strain SL476)</name>
    <dbReference type="NCBI Taxonomy" id="454169"/>
    <lineage>
        <taxon>Bacteria</taxon>
        <taxon>Pseudomonadati</taxon>
        <taxon>Pseudomonadota</taxon>
        <taxon>Gammaproteobacteria</taxon>
        <taxon>Enterobacterales</taxon>
        <taxon>Enterobacteriaceae</taxon>
        <taxon>Salmonella</taxon>
    </lineage>
</organism>